<keyword id="KW-0007">Acetylation</keyword>
<keyword id="KW-0025">Alternative splicing</keyword>
<keyword id="KW-0963">Cytoplasm</keyword>
<keyword id="KW-0597">Phosphoprotein</keyword>
<keyword id="KW-0650">Protein phosphatase inhibitor</keyword>
<keyword id="KW-1267">Proteomics identification</keyword>
<keyword id="KW-1185">Reference proteome</keyword>
<comment type="function">
    <text>Inhibitor of protein-phosphatase 1.</text>
</comment>
<comment type="interaction">
    <interactant intactId="EBI-722119">
        <id>Q9UD71</id>
    </interactant>
    <interactant intactId="EBI-6426464">
        <id>Q8WZ60</id>
        <label>KLHL6</label>
    </interactant>
    <organismsDiffer>false</organismsDiffer>
    <experiments>3</experiments>
</comment>
<comment type="interaction">
    <interactant intactId="EBI-722119">
        <id>Q9UD71</id>
    </interactant>
    <interactant intactId="EBI-717422">
        <id>Q12800</id>
        <label>TFCP2</label>
    </interactant>
    <organismsDiffer>false</organismsDiffer>
    <experiments>3</experiments>
</comment>
<comment type="subcellular location">
    <subcellularLocation>
        <location>Cytoplasm</location>
    </subcellularLocation>
</comment>
<comment type="alternative products">
    <event type="alternative splicing"/>
    <isoform>
        <id>Q9UD71-1</id>
        <name>1</name>
        <sequence type="displayed"/>
    </isoform>
    <isoform>
        <id>Q9UD71-2</id>
        <name>2</name>
        <name>t-DARPP</name>
        <sequence type="described" ref="VSP_005117"/>
    </isoform>
</comment>
<comment type="PTM">
    <text>Dopamine- and cyclic AMP-regulated neuronal phosphoprotein.</text>
</comment>
<comment type="PTM">
    <text evidence="1">Phosphorylation of Thr-34 is required for activity.</text>
</comment>
<comment type="similarity">
    <text evidence="12">Belongs to the protein phosphatase inhibitor 1 family.</text>
</comment>
<comment type="online information" name="Atlas of Genetics and Cytogenetics in Oncology and Haematology">
    <link uri="https://atlasgeneticsoncology.org/gene/44096/PPP1R1B"/>
</comment>
<accession>Q9UD71</accession>
<accession>Q547V9</accession>
<accession>Q547W0</accession>
<accession>Q9H7G1</accession>
<proteinExistence type="evidence at protein level"/>
<sequence>MDPKDRKKIQFSVPAPPSQLDPRQVEMIRRRRPTPAMLFRLSEHSSPEEEASPHQRASGEGHHLKSKRPNPCAYTPPSLKAVQRIAESHLQSISNLNENQASEEEDELGELRELGYPREEDEEEEEDDEEEEEEEDSQAEVLKVIRQSAGQKTTCGQGLEGPWERPPPLDESERDGGSEDQVEDPALSEPGEEPQRPSPSEPGT</sequence>
<feature type="chain" id="PRO_0000071473" description="Protein phosphatase 1 regulatory subunit 1B">
    <location>
        <begin position="1"/>
        <end position="204"/>
    </location>
</feature>
<feature type="region of interest" description="Disordered" evidence="5">
    <location>
        <begin position="1"/>
        <end position="204"/>
    </location>
</feature>
<feature type="compositionally biased region" description="Basic and acidic residues" evidence="5">
    <location>
        <begin position="41"/>
        <end position="63"/>
    </location>
</feature>
<feature type="compositionally biased region" description="Polar residues" evidence="5">
    <location>
        <begin position="89"/>
        <end position="100"/>
    </location>
</feature>
<feature type="compositionally biased region" description="Basic and acidic residues" evidence="5">
    <location>
        <begin position="109"/>
        <end position="118"/>
    </location>
</feature>
<feature type="compositionally biased region" description="Acidic residues" evidence="5">
    <location>
        <begin position="119"/>
        <end position="138"/>
    </location>
</feature>
<feature type="compositionally biased region" description="Acidic residues" evidence="5">
    <location>
        <begin position="170"/>
        <end position="183"/>
    </location>
</feature>
<feature type="modified residue" description="N-acetylmethionine" evidence="2">
    <location>
        <position position="1"/>
    </location>
</feature>
<feature type="modified residue" description="Phosphothreonine; by PKA" evidence="2">
    <location>
        <position position="34"/>
    </location>
</feature>
<feature type="modified residue" description="Phosphoserine" evidence="3">
    <location>
        <position position="45"/>
    </location>
</feature>
<feature type="modified residue" description="Phosphoserine" evidence="3">
    <location>
        <position position="46"/>
    </location>
</feature>
<feature type="modified residue" description="Phosphothreonine; by CDK5" evidence="6">
    <location>
        <position position="75"/>
    </location>
</feature>
<feature type="modified residue" description="Phosphoserine" evidence="3">
    <location>
        <position position="102"/>
    </location>
</feature>
<feature type="modified residue" description="Phosphoserine" evidence="4">
    <location>
        <position position="137"/>
    </location>
</feature>
<feature type="modified residue" description="Phosphoserine" evidence="3">
    <location>
        <position position="198"/>
    </location>
</feature>
<feature type="splice variant" id="VSP_005117" description="In isoform 2." evidence="7 8 9 10 11">
    <location>
        <begin position="1"/>
        <end position="36"/>
    </location>
</feature>
<feature type="sequence conflict" description="In Ref. 1." evidence="12" ref="1">
    <original>CGQ</original>
    <variation>RGL</variation>
    <location>
        <begin position="155"/>
        <end position="157"/>
    </location>
</feature>
<feature type="sequence conflict" description="In Ref. 1." evidence="12" ref="1">
    <original>T</original>
    <variation>R</variation>
    <location>
        <position position="204"/>
    </location>
</feature>
<dbReference type="EMBL" id="AF464196">
    <property type="protein sequence ID" value="AAM76683.1"/>
    <property type="molecule type" value="mRNA"/>
</dbReference>
<dbReference type="EMBL" id="AY070271">
    <property type="protein sequence ID" value="AAL59016.1"/>
    <property type="molecule type" value="mRNA"/>
</dbReference>
<dbReference type="EMBL" id="AF435972">
    <property type="protein sequence ID" value="AAP35094.1"/>
    <property type="molecule type" value="mRNA"/>
</dbReference>
<dbReference type="EMBL" id="AF435973">
    <property type="protein sequence ID" value="AAP35095.1"/>
    <property type="molecule type" value="mRNA"/>
</dbReference>
<dbReference type="EMBL" id="AF435974">
    <property type="protein sequence ID" value="AAP35096.1"/>
    <property type="molecule type" value="mRNA"/>
</dbReference>
<dbReference type="EMBL" id="AF435975">
    <property type="protein sequence ID" value="AAP35097.1"/>
    <property type="molecule type" value="Genomic_DNA"/>
</dbReference>
<dbReference type="EMBL" id="AF435975">
    <property type="protein sequence ID" value="AAP35098.1"/>
    <property type="molecule type" value="Genomic_DNA"/>
</dbReference>
<dbReference type="EMBL" id="AK024593">
    <property type="protein sequence ID" value="BAB14931.1"/>
    <property type="molecule type" value="mRNA"/>
</dbReference>
<dbReference type="EMBL" id="BT007076">
    <property type="protein sequence ID" value="AAP35739.1"/>
    <property type="molecule type" value="mRNA"/>
</dbReference>
<dbReference type="EMBL" id="BC001519">
    <property type="protein sequence ID" value="AAH01519.1"/>
    <property type="molecule type" value="mRNA"/>
</dbReference>
<dbReference type="CCDS" id="CCDS11339.1">
    <molecule id="Q9UD71-1"/>
</dbReference>
<dbReference type="CCDS" id="CCDS11340.1">
    <molecule id="Q9UD71-2"/>
</dbReference>
<dbReference type="RefSeq" id="NP_001229393.1">
    <molecule id="Q9UD71-2"/>
    <property type="nucleotide sequence ID" value="NM_001242464.2"/>
</dbReference>
<dbReference type="RefSeq" id="NP_115568.2">
    <molecule id="Q9UD71-1"/>
    <property type="nucleotide sequence ID" value="NM_032192.3"/>
</dbReference>
<dbReference type="RefSeq" id="NP_852606.1">
    <molecule id="Q9UD71-2"/>
    <property type="nucleotide sequence ID" value="NM_181505.4"/>
</dbReference>
<dbReference type="RefSeq" id="XP_016880705.1">
    <molecule id="Q9UD71-1"/>
    <property type="nucleotide sequence ID" value="XM_017025216.3"/>
</dbReference>
<dbReference type="RefSeq" id="XP_016880706.1">
    <molecule id="Q9UD71-2"/>
    <property type="nucleotide sequence ID" value="XM_017025217.3"/>
</dbReference>
<dbReference type="RefSeq" id="XP_054173515.1">
    <molecule id="Q9UD71-1"/>
    <property type="nucleotide sequence ID" value="XM_054317540.1"/>
</dbReference>
<dbReference type="RefSeq" id="XP_054173516.1">
    <molecule id="Q9UD71-2"/>
    <property type="nucleotide sequence ID" value="XM_054317541.1"/>
</dbReference>
<dbReference type="BioGRID" id="123915">
    <property type="interactions" value="7"/>
</dbReference>
<dbReference type="ELM" id="Q9UD71"/>
<dbReference type="FunCoup" id="Q9UD71">
    <property type="interactions" value="739"/>
</dbReference>
<dbReference type="IntAct" id="Q9UD71">
    <property type="interactions" value="5"/>
</dbReference>
<dbReference type="STRING" id="9606.ENSP00000254079"/>
<dbReference type="iPTMnet" id="Q9UD71"/>
<dbReference type="PhosphoSitePlus" id="Q9UD71"/>
<dbReference type="BioMuta" id="PPP1R1B"/>
<dbReference type="DMDM" id="23831292"/>
<dbReference type="jPOST" id="Q9UD71"/>
<dbReference type="MassIVE" id="Q9UD71"/>
<dbReference type="PaxDb" id="9606-ENSP00000254079"/>
<dbReference type="PeptideAtlas" id="Q9UD71"/>
<dbReference type="ProteomicsDB" id="84112">
    <molecule id="Q9UD71-1"/>
</dbReference>
<dbReference type="ProteomicsDB" id="84113">
    <molecule id="Q9UD71-2"/>
</dbReference>
<dbReference type="Antibodypedia" id="28294">
    <property type="antibodies" value="767 antibodies from 41 providers"/>
</dbReference>
<dbReference type="DNASU" id="84152"/>
<dbReference type="Ensembl" id="ENST00000254079.9">
    <molecule id="Q9UD71-1"/>
    <property type="protein sequence ID" value="ENSP00000254079.4"/>
    <property type="gene ID" value="ENSG00000131771.14"/>
</dbReference>
<dbReference type="Ensembl" id="ENST00000394265.5">
    <molecule id="Q9UD71-2"/>
    <property type="protein sequence ID" value="ENSP00000377808.1"/>
    <property type="gene ID" value="ENSG00000131771.14"/>
</dbReference>
<dbReference type="Ensembl" id="ENST00000394267.2">
    <molecule id="Q9UD71-2"/>
    <property type="protein sequence ID" value="ENSP00000377810.2"/>
    <property type="gene ID" value="ENSG00000131771.14"/>
</dbReference>
<dbReference type="Ensembl" id="ENST00000580825.5">
    <molecule id="Q9UD71-1"/>
    <property type="protein sequence ID" value="ENSP00000462137.1"/>
    <property type="gene ID" value="ENSG00000131771.14"/>
</dbReference>
<dbReference type="GeneID" id="84152"/>
<dbReference type="KEGG" id="hsa:84152"/>
<dbReference type="MANE-Select" id="ENST00000254079.9">
    <property type="protein sequence ID" value="ENSP00000254079.4"/>
    <property type="RefSeq nucleotide sequence ID" value="NM_032192.4"/>
    <property type="RefSeq protein sequence ID" value="NP_115568.2"/>
</dbReference>
<dbReference type="UCSC" id="uc002hrz.4">
    <molecule id="Q9UD71-1"/>
    <property type="organism name" value="human"/>
</dbReference>
<dbReference type="AGR" id="HGNC:9287"/>
<dbReference type="CTD" id="84152"/>
<dbReference type="DisGeNET" id="84152"/>
<dbReference type="GeneCards" id="PPP1R1B"/>
<dbReference type="HGNC" id="HGNC:9287">
    <property type="gene designation" value="PPP1R1B"/>
</dbReference>
<dbReference type="HPA" id="ENSG00000131771">
    <property type="expression patterns" value="Group enriched (brain, choroid plexus)"/>
</dbReference>
<dbReference type="MIM" id="604399">
    <property type="type" value="gene"/>
</dbReference>
<dbReference type="neXtProt" id="NX_Q9UD71"/>
<dbReference type="OpenTargets" id="ENSG00000131771"/>
<dbReference type="PharmGKB" id="PA33639"/>
<dbReference type="VEuPathDB" id="HostDB:ENSG00000131771"/>
<dbReference type="eggNOG" id="ENOG502S19Z">
    <property type="taxonomic scope" value="Eukaryota"/>
</dbReference>
<dbReference type="GeneTree" id="ENSGT00730000111283"/>
<dbReference type="InParanoid" id="Q9UD71"/>
<dbReference type="OMA" id="EDPCEGD"/>
<dbReference type="OrthoDB" id="9946890at2759"/>
<dbReference type="PAN-GO" id="Q9UD71">
    <property type="GO annotations" value="2 GO annotations based on evolutionary models"/>
</dbReference>
<dbReference type="PhylomeDB" id="Q9UD71"/>
<dbReference type="TreeFam" id="TF332576"/>
<dbReference type="PathwayCommons" id="Q9UD71"/>
<dbReference type="Reactome" id="R-HSA-180024">
    <property type="pathway name" value="DARPP-32 events"/>
</dbReference>
<dbReference type="SignaLink" id="Q9UD71"/>
<dbReference type="SIGNOR" id="Q9UD71"/>
<dbReference type="BioGRID-ORCS" id="84152">
    <property type="hits" value="17 hits in 1156 CRISPR screens"/>
</dbReference>
<dbReference type="ChiTaRS" id="PPP1R1B">
    <property type="organism name" value="human"/>
</dbReference>
<dbReference type="GeneWiki" id="PPP1R1B"/>
<dbReference type="GenomeRNAi" id="84152"/>
<dbReference type="Pharos" id="Q9UD71">
    <property type="development level" value="Tbio"/>
</dbReference>
<dbReference type="PRO" id="PR:Q9UD71"/>
<dbReference type="Proteomes" id="UP000005640">
    <property type="component" value="Chromosome 17"/>
</dbReference>
<dbReference type="RNAct" id="Q9UD71">
    <property type="molecule type" value="protein"/>
</dbReference>
<dbReference type="Bgee" id="ENSG00000131771">
    <property type="expression patterns" value="Expressed in putamen and 140 other cell types or tissues"/>
</dbReference>
<dbReference type="ExpressionAtlas" id="Q9UD71">
    <property type="expression patterns" value="baseline and differential"/>
</dbReference>
<dbReference type="GO" id="GO:0005737">
    <property type="term" value="C:cytoplasm"/>
    <property type="evidence" value="ECO:0000318"/>
    <property type="project" value="GO_Central"/>
</dbReference>
<dbReference type="GO" id="GO:0005829">
    <property type="term" value="C:cytosol"/>
    <property type="evidence" value="ECO:0000304"/>
    <property type="project" value="Reactome"/>
</dbReference>
<dbReference type="GO" id="GO:0043025">
    <property type="term" value="C:neuronal cell body"/>
    <property type="evidence" value="ECO:0007669"/>
    <property type="project" value="Ensembl"/>
</dbReference>
<dbReference type="GO" id="GO:0005634">
    <property type="term" value="C:nucleus"/>
    <property type="evidence" value="ECO:0007669"/>
    <property type="project" value="Ensembl"/>
</dbReference>
<dbReference type="GO" id="GO:0004862">
    <property type="term" value="F:cAMP-dependent protein kinase inhibitor activity"/>
    <property type="evidence" value="ECO:0000304"/>
    <property type="project" value="Reactome"/>
</dbReference>
<dbReference type="GO" id="GO:0004860">
    <property type="term" value="F:protein kinase inhibitor activity"/>
    <property type="evidence" value="ECO:0000304"/>
    <property type="project" value="UniProtKB"/>
</dbReference>
<dbReference type="GO" id="GO:0004864">
    <property type="term" value="F:protein phosphatase inhibitor activity"/>
    <property type="evidence" value="ECO:0000314"/>
    <property type="project" value="CAFA"/>
</dbReference>
<dbReference type="GO" id="GO:0019888">
    <property type="term" value="F:protein phosphatase regulator activity"/>
    <property type="evidence" value="ECO:0000304"/>
    <property type="project" value="Reactome"/>
</dbReference>
<dbReference type="GO" id="GO:0048148">
    <property type="term" value="P:behavioral response to cocaine"/>
    <property type="evidence" value="ECO:0007669"/>
    <property type="project" value="Ensembl"/>
</dbReference>
<dbReference type="GO" id="GO:0071314">
    <property type="term" value="P:cellular response to cocaine"/>
    <property type="evidence" value="ECO:0007669"/>
    <property type="project" value="Ensembl"/>
</dbReference>
<dbReference type="GO" id="GO:0006351">
    <property type="term" value="P:DNA-templated transcription"/>
    <property type="evidence" value="ECO:0007669"/>
    <property type="project" value="Ensembl"/>
</dbReference>
<dbReference type="GO" id="GO:0035556">
    <property type="term" value="P:intracellular signal transduction"/>
    <property type="evidence" value="ECO:0000318"/>
    <property type="project" value="GO_Central"/>
</dbReference>
<dbReference type="GO" id="GO:0007626">
    <property type="term" value="P:locomotory behavior"/>
    <property type="evidence" value="ECO:0007669"/>
    <property type="project" value="Ensembl"/>
</dbReference>
<dbReference type="GO" id="GO:0007621">
    <property type="term" value="P:negative regulation of female receptivity"/>
    <property type="evidence" value="ECO:0007669"/>
    <property type="project" value="Ensembl"/>
</dbReference>
<dbReference type="GO" id="GO:0001975">
    <property type="term" value="P:response to amphetamine"/>
    <property type="evidence" value="ECO:0007669"/>
    <property type="project" value="Ensembl"/>
</dbReference>
<dbReference type="GO" id="GO:0043278">
    <property type="term" value="P:response to morphine"/>
    <property type="evidence" value="ECO:0007669"/>
    <property type="project" value="Ensembl"/>
</dbReference>
<dbReference type="GO" id="GO:0007165">
    <property type="term" value="P:signal transduction"/>
    <property type="evidence" value="ECO:0000304"/>
    <property type="project" value="UniProtKB"/>
</dbReference>
<dbReference type="GO" id="GO:0008542">
    <property type="term" value="P:visual learning"/>
    <property type="evidence" value="ECO:0007669"/>
    <property type="project" value="Ensembl"/>
</dbReference>
<dbReference type="InterPro" id="IPR008466">
    <property type="entry name" value="PPP1R1A/B/C"/>
</dbReference>
<dbReference type="PANTHER" id="PTHR15417:SF2">
    <property type="entry name" value="PROTEIN PHOSPHATASE 1 REGULATORY SUBUNIT 1B"/>
    <property type="match status" value="1"/>
</dbReference>
<dbReference type="PANTHER" id="PTHR15417">
    <property type="entry name" value="PROTEIN PHOSPHATASE INHIBITOR AND DOPAMINE- AND CAMP-REGULATED NEURONAL PHOSPHOPROTEIN"/>
    <property type="match status" value="1"/>
</dbReference>
<dbReference type="Pfam" id="PF05395">
    <property type="entry name" value="DARPP-32"/>
    <property type="match status" value="1"/>
</dbReference>
<organism>
    <name type="scientific">Homo sapiens</name>
    <name type="common">Human</name>
    <dbReference type="NCBI Taxonomy" id="9606"/>
    <lineage>
        <taxon>Eukaryota</taxon>
        <taxon>Metazoa</taxon>
        <taxon>Chordata</taxon>
        <taxon>Craniata</taxon>
        <taxon>Vertebrata</taxon>
        <taxon>Euteleostomi</taxon>
        <taxon>Mammalia</taxon>
        <taxon>Eutheria</taxon>
        <taxon>Euarchontoglires</taxon>
        <taxon>Primates</taxon>
        <taxon>Haplorrhini</taxon>
        <taxon>Catarrhini</taxon>
        <taxon>Hominidae</taxon>
        <taxon>Homo</taxon>
    </lineage>
</organism>
<protein>
    <recommendedName>
        <fullName>Protein phosphatase 1 regulatory subunit 1B</fullName>
    </recommendedName>
    <alternativeName>
        <fullName>DARPP-32</fullName>
    </alternativeName>
    <alternativeName>
        <fullName>Dopamine- and cAMP-regulated neuronal phosphoprotein</fullName>
    </alternativeName>
</protein>
<reference key="1">
    <citation type="journal article" date="1994" name="J. Neurosci.">
        <title>Expression of mRNAs encoding ARPP-16/19, ARPP-21, and DARPP-32 in human brain tissue.</title>
        <authorList>
            <person name="Brene S."/>
            <person name="Lindefors N."/>
            <person name="Ehrlich M."/>
            <person name="Taubes T."/>
            <person name="Horiuchi A."/>
            <person name="Kopp J."/>
            <person name="Hall H."/>
            <person name="Sedvall G."/>
            <person name="Greengard P."/>
            <person name="Persson H."/>
        </authorList>
    </citation>
    <scope>NUCLEOTIDE SEQUENCE [MRNA] (ISOFORM 1)</scope>
    <source>
        <tissue>Brain</tissue>
    </source>
</reference>
<reference key="2">
    <citation type="journal article" date="2002" name="Cancer Res.">
        <title>Gastric cancers overexpress DARPP-32 and a novel isoform, t-DARPP.</title>
        <authorList>
            <person name="El-Rifai W."/>
            <person name="Smith M.F. Jr."/>
            <person name="Li G."/>
            <person name="Beckler A."/>
            <person name="Carl V.S."/>
            <person name="Montgomery E."/>
            <person name="Knuutila S."/>
            <person name="Moskaluk C.A."/>
            <person name="Frierson H.F. Jr."/>
            <person name="Powell S.M."/>
        </authorList>
    </citation>
    <scope>NUCLEOTIDE SEQUENCE [MRNA] (ISOFORMS 1 AND 2)</scope>
</reference>
<reference key="3">
    <citation type="submission" date="2001-10" db="EMBL/GenBank/DDBJ databases">
        <title>A family of genes encoding PKC-dependent protein phosphatase 1 (PP1) inhibitors.</title>
        <authorList>
            <person name="Liu Q.-R."/>
            <person name="Uhl G.R."/>
        </authorList>
    </citation>
    <scope>NUCLEOTIDE SEQUENCE [GENOMIC DNA / MRNA] (ISOFORMS 1 AND 2)</scope>
</reference>
<reference key="4">
    <citation type="journal article" date="2004" name="Nat. Genet.">
        <title>Complete sequencing and characterization of 21,243 full-length human cDNAs.</title>
        <authorList>
            <person name="Ota T."/>
            <person name="Suzuki Y."/>
            <person name="Nishikawa T."/>
            <person name="Otsuki T."/>
            <person name="Sugiyama T."/>
            <person name="Irie R."/>
            <person name="Wakamatsu A."/>
            <person name="Hayashi K."/>
            <person name="Sato H."/>
            <person name="Nagai K."/>
            <person name="Kimura K."/>
            <person name="Makita H."/>
            <person name="Sekine M."/>
            <person name="Obayashi M."/>
            <person name="Nishi T."/>
            <person name="Shibahara T."/>
            <person name="Tanaka T."/>
            <person name="Ishii S."/>
            <person name="Yamamoto J."/>
            <person name="Saito K."/>
            <person name="Kawai Y."/>
            <person name="Isono Y."/>
            <person name="Nakamura Y."/>
            <person name="Nagahari K."/>
            <person name="Murakami K."/>
            <person name="Yasuda T."/>
            <person name="Iwayanagi T."/>
            <person name="Wagatsuma M."/>
            <person name="Shiratori A."/>
            <person name="Sudo H."/>
            <person name="Hosoiri T."/>
            <person name="Kaku Y."/>
            <person name="Kodaira H."/>
            <person name="Kondo H."/>
            <person name="Sugawara M."/>
            <person name="Takahashi M."/>
            <person name="Kanda K."/>
            <person name="Yokoi T."/>
            <person name="Furuya T."/>
            <person name="Kikkawa E."/>
            <person name="Omura Y."/>
            <person name="Abe K."/>
            <person name="Kamihara K."/>
            <person name="Katsuta N."/>
            <person name="Sato K."/>
            <person name="Tanikawa M."/>
            <person name="Yamazaki M."/>
            <person name="Ninomiya K."/>
            <person name="Ishibashi T."/>
            <person name="Yamashita H."/>
            <person name="Murakawa K."/>
            <person name="Fujimori K."/>
            <person name="Tanai H."/>
            <person name="Kimata M."/>
            <person name="Watanabe M."/>
            <person name="Hiraoka S."/>
            <person name="Chiba Y."/>
            <person name="Ishida S."/>
            <person name="Ono Y."/>
            <person name="Takiguchi S."/>
            <person name="Watanabe S."/>
            <person name="Yosida M."/>
            <person name="Hotuta T."/>
            <person name="Kusano J."/>
            <person name="Kanehori K."/>
            <person name="Takahashi-Fujii A."/>
            <person name="Hara H."/>
            <person name="Tanase T.-O."/>
            <person name="Nomura Y."/>
            <person name="Togiya S."/>
            <person name="Komai F."/>
            <person name="Hara R."/>
            <person name="Takeuchi K."/>
            <person name="Arita M."/>
            <person name="Imose N."/>
            <person name="Musashino K."/>
            <person name="Yuuki H."/>
            <person name="Oshima A."/>
            <person name="Sasaki N."/>
            <person name="Aotsuka S."/>
            <person name="Yoshikawa Y."/>
            <person name="Matsunawa H."/>
            <person name="Ichihara T."/>
            <person name="Shiohata N."/>
            <person name="Sano S."/>
            <person name="Moriya S."/>
            <person name="Momiyama H."/>
            <person name="Satoh N."/>
            <person name="Takami S."/>
            <person name="Terashima Y."/>
            <person name="Suzuki O."/>
            <person name="Nakagawa S."/>
            <person name="Senoh A."/>
            <person name="Mizoguchi H."/>
            <person name="Goto Y."/>
            <person name="Shimizu F."/>
            <person name="Wakebe H."/>
            <person name="Hishigaki H."/>
            <person name="Watanabe T."/>
            <person name="Sugiyama A."/>
            <person name="Takemoto M."/>
            <person name="Kawakami B."/>
            <person name="Yamazaki M."/>
            <person name="Watanabe K."/>
            <person name="Kumagai A."/>
            <person name="Itakura S."/>
            <person name="Fukuzumi Y."/>
            <person name="Fujimori Y."/>
            <person name="Komiyama M."/>
            <person name="Tashiro H."/>
            <person name="Tanigami A."/>
            <person name="Fujiwara T."/>
            <person name="Ono T."/>
            <person name="Yamada K."/>
            <person name="Fujii Y."/>
            <person name="Ozaki K."/>
            <person name="Hirao M."/>
            <person name="Ohmori Y."/>
            <person name="Kawabata A."/>
            <person name="Hikiji T."/>
            <person name="Kobatake N."/>
            <person name="Inagaki H."/>
            <person name="Ikema Y."/>
            <person name="Okamoto S."/>
            <person name="Okitani R."/>
            <person name="Kawakami T."/>
            <person name="Noguchi S."/>
            <person name="Itoh T."/>
            <person name="Shigeta K."/>
            <person name="Senba T."/>
            <person name="Matsumura K."/>
            <person name="Nakajima Y."/>
            <person name="Mizuno T."/>
            <person name="Morinaga M."/>
            <person name="Sasaki M."/>
            <person name="Togashi T."/>
            <person name="Oyama M."/>
            <person name="Hata H."/>
            <person name="Watanabe M."/>
            <person name="Komatsu T."/>
            <person name="Mizushima-Sugano J."/>
            <person name="Satoh T."/>
            <person name="Shirai Y."/>
            <person name="Takahashi Y."/>
            <person name="Nakagawa K."/>
            <person name="Okumura K."/>
            <person name="Nagase T."/>
            <person name="Nomura N."/>
            <person name="Kikuchi H."/>
            <person name="Masuho Y."/>
            <person name="Yamashita R."/>
            <person name="Nakai K."/>
            <person name="Yada T."/>
            <person name="Nakamura Y."/>
            <person name="Ohara O."/>
            <person name="Isogai T."/>
            <person name="Sugano S."/>
        </authorList>
    </citation>
    <scope>NUCLEOTIDE SEQUENCE [LARGE SCALE MRNA] (ISOFORM 2)</scope>
    <source>
        <tissue>Adipose tissue</tissue>
    </source>
</reference>
<reference key="5">
    <citation type="submission" date="2003-05" db="EMBL/GenBank/DDBJ databases">
        <title>Cloning of human full-length CDSs in BD Creator(TM) system donor vector.</title>
        <authorList>
            <person name="Kalnine N."/>
            <person name="Chen X."/>
            <person name="Rolfs A."/>
            <person name="Halleck A."/>
            <person name="Hines L."/>
            <person name="Eisenstein S."/>
            <person name="Koundinya M."/>
            <person name="Raphael J."/>
            <person name="Moreira D."/>
            <person name="Kelley T."/>
            <person name="LaBaer J."/>
            <person name="Lin Y."/>
            <person name="Phelan M."/>
            <person name="Farmer A."/>
        </authorList>
    </citation>
    <scope>NUCLEOTIDE SEQUENCE [LARGE SCALE MRNA] (ISOFORM 2)</scope>
</reference>
<reference key="6">
    <citation type="journal article" date="2004" name="Genome Res.">
        <title>The status, quality, and expansion of the NIH full-length cDNA project: the Mammalian Gene Collection (MGC).</title>
        <authorList>
            <consortium name="The MGC Project Team"/>
        </authorList>
    </citation>
    <scope>NUCLEOTIDE SEQUENCE [LARGE SCALE MRNA] (ISOFORM 2)</scope>
    <source>
        <tissue>Colon</tissue>
    </source>
</reference>
<reference key="7">
    <citation type="journal article" date="1999" name="Nature">
        <title>Phosphorylation of DARPP-32 by Cdk5 modulates dopamine signalling in neurons.</title>
        <authorList>
            <person name="Bibb J.A."/>
            <person name="Snyder G.L."/>
            <person name="Nishi A."/>
            <person name="Yan Z."/>
            <person name="Meijer L."/>
            <person name="Fienberg A.A."/>
            <person name="Tsai L.-H."/>
            <person name="Kwon Y.T."/>
            <person name="Girault J.-A."/>
            <person name="Czernik A.J."/>
            <person name="Huganir R.L."/>
            <person name="Hemmings H.C. Jr."/>
            <person name="Nairn A.C."/>
            <person name="Greengard P."/>
        </authorList>
    </citation>
    <scope>PHOSPHORYLATION AT THR-75 BY CDK5</scope>
</reference>
<gene>
    <name type="primary">PPP1R1B</name>
    <name type="synonym">DARPP32</name>
</gene>
<evidence type="ECO:0000250" key="1"/>
<evidence type="ECO:0000250" key="2">
    <source>
        <dbReference type="UniProtKB" id="P07516"/>
    </source>
</evidence>
<evidence type="ECO:0000250" key="3">
    <source>
        <dbReference type="UniProtKB" id="Q60829"/>
    </source>
</evidence>
<evidence type="ECO:0000250" key="4">
    <source>
        <dbReference type="UniProtKB" id="Q6J4I0"/>
    </source>
</evidence>
<evidence type="ECO:0000256" key="5">
    <source>
        <dbReference type="SAM" id="MobiDB-lite"/>
    </source>
</evidence>
<evidence type="ECO:0000269" key="6">
    <source>
    </source>
</evidence>
<evidence type="ECO:0000303" key="7">
    <source>
    </source>
</evidence>
<evidence type="ECO:0000303" key="8">
    <source>
    </source>
</evidence>
<evidence type="ECO:0000303" key="9">
    <source>
    </source>
</evidence>
<evidence type="ECO:0000303" key="10">
    <source ref="3"/>
</evidence>
<evidence type="ECO:0000303" key="11">
    <source ref="5"/>
</evidence>
<evidence type="ECO:0000305" key="12"/>
<name>PPR1B_HUMAN</name>